<name>Y706_BACFR</name>
<proteinExistence type="inferred from homology"/>
<dbReference type="EMBL" id="AP006841">
    <property type="protein sequence ID" value="BAD47453.1"/>
    <property type="molecule type" value="Genomic_DNA"/>
</dbReference>
<dbReference type="RefSeq" id="WP_005784729.1">
    <property type="nucleotide sequence ID" value="NZ_UYXF01000001.1"/>
</dbReference>
<dbReference type="RefSeq" id="YP_097987.1">
    <property type="nucleotide sequence ID" value="NC_006347.1"/>
</dbReference>
<dbReference type="SMR" id="Q64YH3"/>
<dbReference type="STRING" id="295405.BF0706"/>
<dbReference type="KEGG" id="bfr:BF0706"/>
<dbReference type="PATRIC" id="fig|295405.11.peg.712"/>
<dbReference type="HOGENOM" id="CLU_115353_2_1_10"/>
<dbReference type="OrthoDB" id="9802516at2"/>
<dbReference type="Proteomes" id="UP000002197">
    <property type="component" value="Chromosome"/>
</dbReference>
<dbReference type="GO" id="GO:0003676">
    <property type="term" value="F:nucleic acid binding"/>
    <property type="evidence" value="ECO:0007669"/>
    <property type="project" value="InterPro"/>
</dbReference>
<dbReference type="CDD" id="cd20736">
    <property type="entry name" value="PoNe_Nuclease"/>
    <property type="match status" value="1"/>
</dbReference>
<dbReference type="Gene3D" id="3.40.1350.10">
    <property type="match status" value="1"/>
</dbReference>
<dbReference type="HAMAP" id="MF_00048">
    <property type="entry name" value="UPF0102"/>
    <property type="match status" value="1"/>
</dbReference>
<dbReference type="InterPro" id="IPR011335">
    <property type="entry name" value="Restrct_endonuc-II-like"/>
</dbReference>
<dbReference type="InterPro" id="IPR011856">
    <property type="entry name" value="tRNA_endonuc-like_dom_sf"/>
</dbReference>
<dbReference type="InterPro" id="IPR003509">
    <property type="entry name" value="UPF0102_YraN-like"/>
</dbReference>
<dbReference type="PANTHER" id="PTHR34039">
    <property type="entry name" value="UPF0102 PROTEIN YRAN"/>
    <property type="match status" value="1"/>
</dbReference>
<dbReference type="PANTHER" id="PTHR34039:SF1">
    <property type="entry name" value="UPF0102 PROTEIN YRAN"/>
    <property type="match status" value="1"/>
</dbReference>
<dbReference type="Pfam" id="PF02021">
    <property type="entry name" value="UPF0102"/>
    <property type="match status" value="1"/>
</dbReference>
<dbReference type="SUPFAM" id="SSF52980">
    <property type="entry name" value="Restriction endonuclease-like"/>
    <property type="match status" value="1"/>
</dbReference>
<accession>Q64YH3</accession>
<evidence type="ECO:0000255" key="1">
    <source>
        <dbReference type="HAMAP-Rule" id="MF_00048"/>
    </source>
</evidence>
<comment type="similarity">
    <text evidence="1">Belongs to the UPF0102 family.</text>
</comment>
<reference key="1">
    <citation type="journal article" date="2004" name="Proc. Natl. Acad. Sci. U.S.A.">
        <title>Genomic analysis of Bacteroides fragilis reveals extensive DNA inversions regulating cell surface adaptation.</title>
        <authorList>
            <person name="Kuwahara T."/>
            <person name="Yamashita A."/>
            <person name="Hirakawa H."/>
            <person name="Nakayama H."/>
            <person name="Toh H."/>
            <person name="Okada N."/>
            <person name="Kuhara S."/>
            <person name="Hattori M."/>
            <person name="Hayashi T."/>
            <person name="Ohnishi Y."/>
        </authorList>
    </citation>
    <scope>NUCLEOTIDE SEQUENCE [LARGE SCALE GENOMIC DNA]</scope>
    <source>
        <strain>YCH46</strain>
    </source>
</reference>
<protein>
    <recommendedName>
        <fullName evidence="1">UPF0102 protein BF0706</fullName>
    </recommendedName>
</protein>
<organism>
    <name type="scientific">Bacteroides fragilis (strain YCH46)</name>
    <dbReference type="NCBI Taxonomy" id="295405"/>
    <lineage>
        <taxon>Bacteria</taxon>
        <taxon>Pseudomonadati</taxon>
        <taxon>Bacteroidota</taxon>
        <taxon>Bacteroidia</taxon>
        <taxon>Bacteroidales</taxon>
        <taxon>Bacteroidaceae</taxon>
        <taxon>Bacteroides</taxon>
    </lineage>
</organism>
<feature type="chain" id="PRO_1000009190" description="UPF0102 protein BF0706">
    <location>
        <begin position="1"/>
        <end position="121"/>
    </location>
</feature>
<sequence length="121" mass="13962">MAEHNLLGKAGEDAAVDYLERHDYVIRHRNWRKGHFELDIVAAKNGELIIVEVKTRSDTDFALPQDAVTPQKIRRTVIAADTYIKLFQIDEPVRFDIITVIGKTGNFRIEHIKEAFYPPLF</sequence>
<gene>
    <name type="ordered locus">BF0706</name>
</gene>